<protein>
    <recommendedName>
        <fullName evidence="1">Large ribosomal subunit protein bL31</fullName>
    </recommendedName>
    <alternativeName>
        <fullName evidence="2">50S ribosomal protein L31</fullName>
    </alternativeName>
</protein>
<sequence>MPKKGIHPQWYPEAKVICNGEVVMTVGSTKPELKVDVWSGNHPFFTGSQKIIDSEGRVDKFMRKYGMGGKKAR</sequence>
<reference key="1">
    <citation type="journal article" date="2007" name="ISME J.">
        <title>Population level functional diversity in a microbial community revealed by comparative genomic and metagenomic analyses.</title>
        <authorList>
            <person name="Bhaya D."/>
            <person name="Grossman A.R."/>
            <person name="Steunou A.-S."/>
            <person name="Khuri N."/>
            <person name="Cohan F.M."/>
            <person name="Hamamura N."/>
            <person name="Melendrez M.C."/>
            <person name="Bateson M.M."/>
            <person name="Ward D.M."/>
            <person name="Heidelberg J.F."/>
        </authorList>
    </citation>
    <scope>NUCLEOTIDE SEQUENCE [LARGE SCALE GENOMIC DNA]</scope>
    <source>
        <strain>JA-3-3Ab</strain>
    </source>
</reference>
<dbReference type="EMBL" id="CP000239">
    <property type="protein sequence ID" value="ABC99614.1"/>
    <property type="molecule type" value="Genomic_DNA"/>
</dbReference>
<dbReference type="RefSeq" id="WP_011430292.1">
    <property type="nucleotide sequence ID" value="NC_007775.1"/>
</dbReference>
<dbReference type="STRING" id="321327.CYA_1446"/>
<dbReference type="KEGG" id="cya:CYA_1446"/>
<dbReference type="eggNOG" id="COG0254">
    <property type="taxonomic scope" value="Bacteria"/>
</dbReference>
<dbReference type="HOGENOM" id="CLU_114306_1_2_3"/>
<dbReference type="OrthoDB" id="9803251at2"/>
<dbReference type="Proteomes" id="UP000008818">
    <property type="component" value="Chromosome"/>
</dbReference>
<dbReference type="GO" id="GO:1990904">
    <property type="term" value="C:ribonucleoprotein complex"/>
    <property type="evidence" value="ECO:0007669"/>
    <property type="project" value="UniProtKB-KW"/>
</dbReference>
<dbReference type="GO" id="GO:0005840">
    <property type="term" value="C:ribosome"/>
    <property type="evidence" value="ECO:0007669"/>
    <property type="project" value="UniProtKB-KW"/>
</dbReference>
<dbReference type="GO" id="GO:0019843">
    <property type="term" value="F:rRNA binding"/>
    <property type="evidence" value="ECO:0007669"/>
    <property type="project" value="UniProtKB-KW"/>
</dbReference>
<dbReference type="GO" id="GO:0003735">
    <property type="term" value="F:structural constituent of ribosome"/>
    <property type="evidence" value="ECO:0007669"/>
    <property type="project" value="InterPro"/>
</dbReference>
<dbReference type="GO" id="GO:0006412">
    <property type="term" value="P:translation"/>
    <property type="evidence" value="ECO:0007669"/>
    <property type="project" value="UniProtKB-UniRule"/>
</dbReference>
<dbReference type="Gene3D" id="4.10.830.30">
    <property type="entry name" value="Ribosomal protein L31"/>
    <property type="match status" value="1"/>
</dbReference>
<dbReference type="HAMAP" id="MF_00501">
    <property type="entry name" value="Ribosomal_bL31_1"/>
    <property type="match status" value="1"/>
</dbReference>
<dbReference type="InterPro" id="IPR034704">
    <property type="entry name" value="Ribosomal_bL28/bL31-like_sf"/>
</dbReference>
<dbReference type="InterPro" id="IPR002150">
    <property type="entry name" value="Ribosomal_bL31"/>
</dbReference>
<dbReference type="InterPro" id="IPR027491">
    <property type="entry name" value="Ribosomal_bL31_A"/>
</dbReference>
<dbReference type="InterPro" id="IPR042105">
    <property type="entry name" value="Ribosomal_bL31_sf"/>
</dbReference>
<dbReference type="NCBIfam" id="TIGR00105">
    <property type="entry name" value="L31"/>
    <property type="match status" value="1"/>
</dbReference>
<dbReference type="NCBIfam" id="NF000612">
    <property type="entry name" value="PRK00019.1"/>
    <property type="match status" value="1"/>
</dbReference>
<dbReference type="NCBIfam" id="NF001809">
    <property type="entry name" value="PRK00528.1"/>
    <property type="match status" value="1"/>
</dbReference>
<dbReference type="PANTHER" id="PTHR33280">
    <property type="entry name" value="50S RIBOSOMAL PROTEIN L31, CHLOROPLASTIC"/>
    <property type="match status" value="1"/>
</dbReference>
<dbReference type="PANTHER" id="PTHR33280:SF1">
    <property type="entry name" value="LARGE RIBOSOMAL SUBUNIT PROTEIN BL31C"/>
    <property type="match status" value="1"/>
</dbReference>
<dbReference type="Pfam" id="PF01197">
    <property type="entry name" value="Ribosomal_L31"/>
    <property type="match status" value="1"/>
</dbReference>
<dbReference type="PRINTS" id="PR01249">
    <property type="entry name" value="RIBOSOMALL31"/>
</dbReference>
<dbReference type="SUPFAM" id="SSF143800">
    <property type="entry name" value="L28p-like"/>
    <property type="match status" value="1"/>
</dbReference>
<dbReference type="PROSITE" id="PS01143">
    <property type="entry name" value="RIBOSOMAL_L31"/>
    <property type="match status" value="1"/>
</dbReference>
<gene>
    <name evidence="1" type="primary">rpmE</name>
    <name evidence="1" type="synonym">rpl31</name>
    <name type="ordered locus">CYA_1446</name>
</gene>
<name>RL31_SYNJA</name>
<organism>
    <name type="scientific">Synechococcus sp. (strain JA-3-3Ab)</name>
    <name type="common">Cyanobacteria bacterium Yellowstone A-Prime</name>
    <dbReference type="NCBI Taxonomy" id="321327"/>
    <lineage>
        <taxon>Bacteria</taxon>
        <taxon>Bacillati</taxon>
        <taxon>Cyanobacteriota</taxon>
        <taxon>Cyanophyceae</taxon>
        <taxon>Synechococcales</taxon>
        <taxon>Synechococcaceae</taxon>
        <taxon>Synechococcus</taxon>
    </lineage>
</organism>
<accession>Q2JUK0</accession>
<keyword id="KW-0687">Ribonucleoprotein</keyword>
<keyword id="KW-0689">Ribosomal protein</keyword>
<keyword id="KW-0694">RNA-binding</keyword>
<keyword id="KW-0699">rRNA-binding</keyword>
<evidence type="ECO:0000255" key="1">
    <source>
        <dbReference type="HAMAP-Rule" id="MF_00501"/>
    </source>
</evidence>
<evidence type="ECO:0000305" key="2"/>
<proteinExistence type="inferred from homology"/>
<comment type="function">
    <text evidence="1">Binds the 23S rRNA.</text>
</comment>
<comment type="subunit">
    <text evidence="1">Part of the 50S ribosomal subunit.</text>
</comment>
<comment type="similarity">
    <text evidence="1">Belongs to the bacterial ribosomal protein bL31 family. Type A subfamily.</text>
</comment>
<feature type="chain" id="PRO_0000259237" description="Large ribosomal subunit protein bL31">
    <location>
        <begin position="1"/>
        <end position="73"/>
    </location>
</feature>